<evidence type="ECO:0000255" key="1">
    <source>
        <dbReference type="HAMAP-Rule" id="MF_00344"/>
    </source>
</evidence>
<dbReference type="EC" id="6.3.5.2" evidence="1"/>
<dbReference type="EMBL" id="AP006618">
    <property type="protein sequence ID" value="BAD55742.1"/>
    <property type="molecule type" value="Genomic_DNA"/>
</dbReference>
<dbReference type="RefSeq" id="WP_011207427.1">
    <property type="nucleotide sequence ID" value="NC_006361.1"/>
</dbReference>
<dbReference type="SMR" id="Q5Z1E9"/>
<dbReference type="STRING" id="247156.NFA_8970"/>
<dbReference type="MEROPS" id="C26.A07"/>
<dbReference type="GeneID" id="61131725"/>
<dbReference type="KEGG" id="nfa:NFA_8970"/>
<dbReference type="eggNOG" id="COG0518">
    <property type="taxonomic scope" value="Bacteria"/>
</dbReference>
<dbReference type="eggNOG" id="COG0519">
    <property type="taxonomic scope" value="Bacteria"/>
</dbReference>
<dbReference type="HOGENOM" id="CLU_014340_0_5_11"/>
<dbReference type="OrthoDB" id="9802219at2"/>
<dbReference type="UniPathway" id="UPA00189">
    <property type="reaction ID" value="UER00296"/>
</dbReference>
<dbReference type="Proteomes" id="UP000006820">
    <property type="component" value="Chromosome"/>
</dbReference>
<dbReference type="GO" id="GO:0005829">
    <property type="term" value="C:cytosol"/>
    <property type="evidence" value="ECO:0007669"/>
    <property type="project" value="TreeGrafter"/>
</dbReference>
<dbReference type="GO" id="GO:0005524">
    <property type="term" value="F:ATP binding"/>
    <property type="evidence" value="ECO:0007669"/>
    <property type="project" value="UniProtKB-UniRule"/>
</dbReference>
<dbReference type="GO" id="GO:0003921">
    <property type="term" value="F:GMP synthase activity"/>
    <property type="evidence" value="ECO:0007669"/>
    <property type="project" value="InterPro"/>
</dbReference>
<dbReference type="CDD" id="cd01742">
    <property type="entry name" value="GATase1_GMP_Synthase"/>
    <property type="match status" value="1"/>
</dbReference>
<dbReference type="CDD" id="cd01997">
    <property type="entry name" value="GMP_synthase_C"/>
    <property type="match status" value="1"/>
</dbReference>
<dbReference type="FunFam" id="3.30.300.10:FF:000002">
    <property type="entry name" value="GMP synthase [glutamine-hydrolyzing]"/>
    <property type="match status" value="1"/>
</dbReference>
<dbReference type="FunFam" id="3.40.50.620:FF:000001">
    <property type="entry name" value="GMP synthase [glutamine-hydrolyzing]"/>
    <property type="match status" value="1"/>
</dbReference>
<dbReference type="FunFam" id="3.40.50.880:FF:000001">
    <property type="entry name" value="GMP synthase [glutamine-hydrolyzing]"/>
    <property type="match status" value="1"/>
</dbReference>
<dbReference type="Gene3D" id="3.30.300.10">
    <property type="match status" value="1"/>
</dbReference>
<dbReference type="Gene3D" id="3.40.50.880">
    <property type="match status" value="1"/>
</dbReference>
<dbReference type="Gene3D" id="3.40.50.620">
    <property type="entry name" value="HUPs"/>
    <property type="match status" value="1"/>
</dbReference>
<dbReference type="HAMAP" id="MF_00344">
    <property type="entry name" value="GMP_synthase"/>
    <property type="match status" value="1"/>
</dbReference>
<dbReference type="InterPro" id="IPR029062">
    <property type="entry name" value="Class_I_gatase-like"/>
</dbReference>
<dbReference type="InterPro" id="IPR017926">
    <property type="entry name" value="GATASE"/>
</dbReference>
<dbReference type="InterPro" id="IPR001674">
    <property type="entry name" value="GMP_synth_C"/>
</dbReference>
<dbReference type="InterPro" id="IPR004739">
    <property type="entry name" value="GMP_synth_GATase"/>
</dbReference>
<dbReference type="InterPro" id="IPR022955">
    <property type="entry name" value="GMP_synthase"/>
</dbReference>
<dbReference type="InterPro" id="IPR025777">
    <property type="entry name" value="GMPS_ATP_PPase_dom"/>
</dbReference>
<dbReference type="InterPro" id="IPR022310">
    <property type="entry name" value="NAD/GMP_synthase"/>
</dbReference>
<dbReference type="InterPro" id="IPR014729">
    <property type="entry name" value="Rossmann-like_a/b/a_fold"/>
</dbReference>
<dbReference type="NCBIfam" id="TIGR00884">
    <property type="entry name" value="guaA_Cterm"/>
    <property type="match status" value="1"/>
</dbReference>
<dbReference type="NCBIfam" id="TIGR00888">
    <property type="entry name" value="guaA_Nterm"/>
    <property type="match status" value="1"/>
</dbReference>
<dbReference type="NCBIfam" id="NF000848">
    <property type="entry name" value="PRK00074.1"/>
    <property type="match status" value="1"/>
</dbReference>
<dbReference type="PANTHER" id="PTHR11922:SF2">
    <property type="entry name" value="GMP SYNTHASE [GLUTAMINE-HYDROLYZING]"/>
    <property type="match status" value="1"/>
</dbReference>
<dbReference type="PANTHER" id="PTHR11922">
    <property type="entry name" value="GMP SYNTHASE-RELATED"/>
    <property type="match status" value="1"/>
</dbReference>
<dbReference type="Pfam" id="PF00117">
    <property type="entry name" value="GATase"/>
    <property type="match status" value="1"/>
</dbReference>
<dbReference type="Pfam" id="PF00958">
    <property type="entry name" value="GMP_synt_C"/>
    <property type="match status" value="1"/>
</dbReference>
<dbReference type="Pfam" id="PF02540">
    <property type="entry name" value="NAD_synthase"/>
    <property type="match status" value="1"/>
</dbReference>
<dbReference type="PRINTS" id="PR00097">
    <property type="entry name" value="ANTSNTHASEII"/>
</dbReference>
<dbReference type="PRINTS" id="PR00099">
    <property type="entry name" value="CPSGATASE"/>
</dbReference>
<dbReference type="PRINTS" id="PR00096">
    <property type="entry name" value="GATASE"/>
</dbReference>
<dbReference type="SUPFAM" id="SSF52402">
    <property type="entry name" value="Adenine nucleotide alpha hydrolases-like"/>
    <property type="match status" value="1"/>
</dbReference>
<dbReference type="SUPFAM" id="SSF52317">
    <property type="entry name" value="Class I glutamine amidotransferase-like"/>
    <property type="match status" value="1"/>
</dbReference>
<dbReference type="SUPFAM" id="SSF54810">
    <property type="entry name" value="GMP synthetase C-terminal dimerisation domain"/>
    <property type="match status" value="1"/>
</dbReference>
<dbReference type="PROSITE" id="PS51273">
    <property type="entry name" value="GATASE_TYPE_1"/>
    <property type="match status" value="1"/>
</dbReference>
<dbReference type="PROSITE" id="PS51553">
    <property type="entry name" value="GMPS_ATP_PPASE"/>
    <property type="match status" value="1"/>
</dbReference>
<reference key="1">
    <citation type="journal article" date="2004" name="Proc. Natl. Acad. Sci. U.S.A.">
        <title>The complete genomic sequence of Nocardia farcinica IFM 10152.</title>
        <authorList>
            <person name="Ishikawa J."/>
            <person name="Yamashita A."/>
            <person name="Mikami Y."/>
            <person name="Hoshino Y."/>
            <person name="Kurita H."/>
            <person name="Hotta K."/>
            <person name="Shiba T."/>
            <person name="Hattori M."/>
        </authorList>
    </citation>
    <scope>NUCLEOTIDE SEQUENCE [LARGE SCALE GENOMIC DNA]</scope>
    <source>
        <strain>IFM 10152</strain>
    </source>
</reference>
<accession>Q5Z1E9</accession>
<organism>
    <name type="scientific">Nocardia farcinica (strain IFM 10152)</name>
    <dbReference type="NCBI Taxonomy" id="247156"/>
    <lineage>
        <taxon>Bacteria</taxon>
        <taxon>Bacillati</taxon>
        <taxon>Actinomycetota</taxon>
        <taxon>Actinomycetes</taxon>
        <taxon>Mycobacteriales</taxon>
        <taxon>Nocardiaceae</taxon>
        <taxon>Nocardia</taxon>
    </lineage>
</organism>
<name>GUAA_NOCFA</name>
<sequence>MAETQRPVLVVDFGAQYAQLIARRVREASVYSEVVPHTATVEEIAAKKPLAVILSGGPASVYAEGAPQLDPRLFDLNLPVFGICYGFQAMAQALGGTVAHTGTREYGRTELNIDGGVLHGGLPTIQPVWMSHGDAVTDAPEGFEVTGTTAGAPVAAFEDRARRLAGVQYHPEVLHSPHGQQVLSRFLHELAGIPASWTPSNIADVLVEQVRAQVGDGHAICGLSGGVDSAVAAALVQRAIGDRLTCVFVDHGLLRAGEREQVQQDFVASTGAKLVTVDAVDKFLGELKGVTDPEEKRKIIGREFIRSFEDAVRQIVDEQGAAEGKQPEVEFLVQGTLYPDVVESGGGTGTANIKSHHNVGGLPEDLEFELVEPLRLLFKDEVRAVGRELGLPEEIVARQPFPGPGLAIRIIGEVTADRLATLRQADAIAREELTAAGLDRQIWQCPVVLLADVRSVGVQGDGRTYGHPIVLRPVSSEDAMTADWTRLPYEVLERISTRITNEVAEVNRVVLDVTSKPPGTIEWE</sequence>
<proteinExistence type="inferred from homology"/>
<keyword id="KW-0067">ATP-binding</keyword>
<keyword id="KW-0315">Glutamine amidotransferase</keyword>
<keyword id="KW-0332">GMP biosynthesis</keyword>
<keyword id="KW-0436">Ligase</keyword>
<keyword id="KW-0547">Nucleotide-binding</keyword>
<keyword id="KW-0658">Purine biosynthesis</keyword>
<keyword id="KW-1185">Reference proteome</keyword>
<feature type="chain" id="PRO_0000229449" description="GMP synthase [glutamine-hydrolyzing]">
    <location>
        <begin position="1"/>
        <end position="524"/>
    </location>
</feature>
<feature type="domain" description="Glutamine amidotransferase type-1" evidence="1">
    <location>
        <begin position="7"/>
        <end position="196"/>
    </location>
</feature>
<feature type="domain" description="GMPS ATP-PPase" evidence="1">
    <location>
        <begin position="197"/>
        <end position="398"/>
    </location>
</feature>
<feature type="active site" description="Nucleophile" evidence="1">
    <location>
        <position position="84"/>
    </location>
</feature>
<feature type="active site" evidence="1">
    <location>
        <position position="170"/>
    </location>
</feature>
<feature type="active site" evidence="1">
    <location>
        <position position="172"/>
    </location>
</feature>
<feature type="binding site" evidence="1">
    <location>
        <begin position="224"/>
        <end position="230"/>
    </location>
    <ligand>
        <name>ATP</name>
        <dbReference type="ChEBI" id="CHEBI:30616"/>
    </ligand>
</feature>
<gene>
    <name evidence="1" type="primary">guaA</name>
    <name type="ordered locus">NFA_8970</name>
</gene>
<protein>
    <recommendedName>
        <fullName evidence="1">GMP synthase [glutamine-hydrolyzing]</fullName>
        <ecNumber evidence="1">6.3.5.2</ecNumber>
    </recommendedName>
    <alternativeName>
        <fullName evidence="1">GMP synthetase</fullName>
    </alternativeName>
    <alternativeName>
        <fullName evidence="1">Glutamine amidotransferase</fullName>
    </alternativeName>
</protein>
<comment type="function">
    <text evidence="1">Catalyzes the synthesis of GMP from XMP.</text>
</comment>
<comment type="catalytic activity">
    <reaction evidence="1">
        <text>XMP + L-glutamine + ATP + H2O = GMP + L-glutamate + AMP + diphosphate + 2 H(+)</text>
        <dbReference type="Rhea" id="RHEA:11680"/>
        <dbReference type="ChEBI" id="CHEBI:15377"/>
        <dbReference type="ChEBI" id="CHEBI:15378"/>
        <dbReference type="ChEBI" id="CHEBI:29985"/>
        <dbReference type="ChEBI" id="CHEBI:30616"/>
        <dbReference type="ChEBI" id="CHEBI:33019"/>
        <dbReference type="ChEBI" id="CHEBI:57464"/>
        <dbReference type="ChEBI" id="CHEBI:58115"/>
        <dbReference type="ChEBI" id="CHEBI:58359"/>
        <dbReference type="ChEBI" id="CHEBI:456215"/>
        <dbReference type="EC" id="6.3.5.2"/>
    </reaction>
</comment>
<comment type="pathway">
    <text evidence="1">Purine metabolism; GMP biosynthesis; GMP from XMP (L-Gln route): step 1/1.</text>
</comment>
<comment type="subunit">
    <text evidence="1">Homodimer.</text>
</comment>